<organismHost>
    <name type="scientific">Gallus gallus</name>
    <name type="common">Chicken</name>
    <dbReference type="NCBI Taxonomy" id="9031"/>
</organismHost>
<keyword id="KW-0067">ATP-binding</keyword>
<keyword id="KW-0237">DNA synthesis</keyword>
<keyword id="KW-0244">Early protein</keyword>
<keyword id="KW-0418">Kinase</keyword>
<keyword id="KW-0547">Nucleotide-binding</keyword>
<keyword id="KW-0808">Transferase</keyword>
<reference key="1">
    <citation type="journal article" date="1989" name="J. Gen. Virol.">
        <title>Nucleotide and predicted amino acid sequences of the Marek's disease virus and turkey herpesvirus thymidine kinase genes; comparison with thymidine kinase genes of other herpesviruses.</title>
        <authorList>
            <person name="Scott S.D."/>
            <person name="Ross N.L.J."/>
            <person name="Binns M.M."/>
        </authorList>
    </citation>
    <scope>NUCLEOTIDE SEQUENCE [GENOMIC DNA]</scope>
</reference>
<organism>
    <name type="scientific">Gallid herpesvirus 2 (strain RB-1b)</name>
    <name type="common">GaHV-2</name>
    <name type="synonym">Marek's disease herpesvirus type 1</name>
    <dbReference type="NCBI Taxonomy" id="33707"/>
    <lineage>
        <taxon>Viruses</taxon>
        <taxon>Duplodnaviria</taxon>
        <taxon>Heunggongvirae</taxon>
        <taxon>Peploviricota</taxon>
        <taxon>Herviviricetes</taxon>
        <taxon>Herpesvirales</taxon>
        <taxon>Orthoherpesviridae</taxon>
        <taxon>Alphaherpesvirinae</taxon>
        <taxon>Mardivirus</taxon>
        <taxon>Mardivirus gallidalpha2</taxon>
        <taxon>Gallid alphaherpesvirus 2</taxon>
    </lineage>
</organism>
<accession>P17653</accession>
<gene>
    <name evidence="1" type="primary">TK</name>
</gene>
<name>KITH_GAHVR</name>
<comment type="function">
    <text evidence="1">Catalyzes the transfer of the gamma-phospho group of ATP to thymidine to generate dTMP in the salvage pathway of pyrimidine synthesis. The dTMP serves as a substrate for DNA polymerase during viral DNA replication. Allows the virus to be reactivated and to grow in non-proliferative cells lacking a high concentration of phosphorylated nucleic acid precursors.</text>
</comment>
<comment type="catalytic activity">
    <reaction evidence="1">
        <text>thymidine + ATP = dTMP + ADP + H(+)</text>
        <dbReference type="Rhea" id="RHEA:19129"/>
        <dbReference type="ChEBI" id="CHEBI:15378"/>
        <dbReference type="ChEBI" id="CHEBI:17748"/>
        <dbReference type="ChEBI" id="CHEBI:30616"/>
        <dbReference type="ChEBI" id="CHEBI:63528"/>
        <dbReference type="ChEBI" id="CHEBI:456216"/>
        <dbReference type="EC" id="2.7.1.21"/>
    </reaction>
</comment>
<comment type="subunit">
    <text evidence="1">Homodimer.</text>
</comment>
<comment type="similarity">
    <text evidence="1">Belongs to the herpesviridae thymidine kinase family.</text>
</comment>
<feature type="chain" id="PRO_0000175076" description="Thymidine kinase">
    <location>
        <begin position="1"/>
        <end position="352"/>
    </location>
</feature>
<feature type="active site" description="Proton acceptor" evidence="1">
    <location>
        <position position="54"/>
    </location>
</feature>
<feature type="binding site" evidence="1">
    <location>
        <begin position="26"/>
        <end position="33"/>
    </location>
    <ligand>
        <name>ATP</name>
        <dbReference type="ChEBI" id="CHEBI:30616"/>
    </ligand>
</feature>
<feature type="binding site" evidence="1">
    <location>
        <position position="95"/>
    </location>
    <ligand>
        <name>substrate</name>
    </ligand>
</feature>
<feature type="binding site" evidence="1">
    <location>
        <position position="185"/>
    </location>
    <ligand>
        <name>ATP</name>
        <dbReference type="ChEBI" id="CHEBI:30616"/>
    </ligand>
</feature>
<feature type="binding site" evidence="1">
    <location>
        <position position="191"/>
    </location>
    <ligand>
        <name>substrate</name>
    </ligand>
</feature>
<dbReference type="EC" id="2.7.1.21" evidence="1"/>
<dbReference type="EMBL" id="D13956">
    <property type="protein sequence ID" value="BAA03049.1"/>
    <property type="molecule type" value="Genomic_DNA"/>
</dbReference>
<dbReference type="PIR" id="B33375">
    <property type="entry name" value="KIBEMV"/>
</dbReference>
<dbReference type="SMR" id="P17653"/>
<dbReference type="GO" id="GO:0005524">
    <property type="term" value="F:ATP binding"/>
    <property type="evidence" value="ECO:0007669"/>
    <property type="project" value="UniProtKB-KW"/>
</dbReference>
<dbReference type="GO" id="GO:0004797">
    <property type="term" value="F:thymidine kinase activity"/>
    <property type="evidence" value="ECO:0007669"/>
    <property type="project" value="UniProtKB-EC"/>
</dbReference>
<dbReference type="GO" id="GO:0071897">
    <property type="term" value="P:DNA biosynthetic process"/>
    <property type="evidence" value="ECO:0007669"/>
    <property type="project" value="UniProtKB-KW"/>
</dbReference>
<dbReference type="GO" id="GO:0006230">
    <property type="term" value="P:TMP biosynthetic process"/>
    <property type="evidence" value="ECO:0007669"/>
    <property type="project" value="InterPro"/>
</dbReference>
<dbReference type="Gene3D" id="3.40.50.300">
    <property type="entry name" value="P-loop containing nucleotide triphosphate hydrolases"/>
    <property type="match status" value="1"/>
</dbReference>
<dbReference type="HAMAP" id="MF_04029">
    <property type="entry name" value="HSV_KITH"/>
    <property type="match status" value="1"/>
</dbReference>
<dbReference type="InterPro" id="IPR001889">
    <property type="entry name" value="Herpes_TK"/>
</dbReference>
<dbReference type="InterPro" id="IPR027417">
    <property type="entry name" value="P-loop_NTPase"/>
</dbReference>
<dbReference type="Pfam" id="PF00693">
    <property type="entry name" value="Herpes_TK"/>
    <property type="match status" value="1"/>
</dbReference>
<dbReference type="SUPFAM" id="SSF52540">
    <property type="entry name" value="P-loop containing nucleoside triphosphate hydrolases"/>
    <property type="match status" value="1"/>
</dbReference>
<protein>
    <recommendedName>
        <fullName evidence="1">Thymidine kinase</fullName>
        <ecNumber evidence="1">2.7.1.21</ecNumber>
    </recommendedName>
</protein>
<sequence length="352" mass="40366">MSEPQSWSVMASQMTSAQLIRVYLDGSMGIGKTSMLNEIPTHSLMGVPVLKVFEPMKYWRYYFTDLVTTVNDTCDRRRRGEFSLFQSSMIVTALQSKFADPYLVFHERLSSKCHRITGTRGNPSLILILDRHPISATVCFPIARHLTGDCSLEMLISMIIRLPQEPPGCNLVIVDLHDEKEHVSRLSSRNRTGEKTDLLMLRALNAVYSCLVDTIMYANHICPYSKDEWESEWLDLPWFDTSLATTFINEPRTDYRGSRVSLHHTLLAIFKRRELCAEDGSLSTTHAWILWGLLMKLRNINVERFNITGLSTTKCVESFMDTMSERLVTHSSWNDAFEIEADVLAYNKEMAM</sequence>
<proteinExistence type="inferred from homology"/>
<evidence type="ECO:0000255" key="1">
    <source>
        <dbReference type="HAMAP-Rule" id="MF_04029"/>
    </source>
</evidence>